<organism>
    <name type="scientific">Thermoanaerobacter sp. (strain X514)</name>
    <dbReference type="NCBI Taxonomy" id="399726"/>
    <lineage>
        <taxon>Bacteria</taxon>
        <taxon>Bacillati</taxon>
        <taxon>Bacillota</taxon>
        <taxon>Clostridia</taxon>
        <taxon>Thermoanaerobacterales</taxon>
        <taxon>Thermoanaerobacteraceae</taxon>
        <taxon>Thermoanaerobacter</taxon>
    </lineage>
</organism>
<name>RL1_THEPX</name>
<protein>
    <recommendedName>
        <fullName evidence="1">Large ribosomal subunit protein uL1</fullName>
    </recommendedName>
    <alternativeName>
        <fullName evidence="2">50S ribosomal protein L1</fullName>
    </alternativeName>
</protein>
<reference key="1">
    <citation type="submission" date="2008-01" db="EMBL/GenBank/DDBJ databases">
        <title>Complete sequence of Thermoanaerobacter sp. X514.</title>
        <authorList>
            <consortium name="US DOE Joint Genome Institute"/>
            <person name="Copeland A."/>
            <person name="Lucas S."/>
            <person name="Lapidus A."/>
            <person name="Barry K."/>
            <person name="Glavina del Rio T."/>
            <person name="Dalin E."/>
            <person name="Tice H."/>
            <person name="Pitluck S."/>
            <person name="Bruce D."/>
            <person name="Goodwin L."/>
            <person name="Saunders E."/>
            <person name="Brettin T."/>
            <person name="Detter J.C."/>
            <person name="Han C."/>
            <person name="Schmutz J."/>
            <person name="Larimer F."/>
            <person name="Land M."/>
            <person name="Hauser L."/>
            <person name="Kyrpides N."/>
            <person name="Kim E."/>
            <person name="Hemme C."/>
            <person name="Fields M.W."/>
            <person name="He Z."/>
            <person name="Zhou J."/>
            <person name="Richardson P."/>
        </authorList>
    </citation>
    <scope>NUCLEOTIDE SEQUENCE [LARGE SCALE GENOMIC DNA]</scope>
    <source>
        <strain>X514</strain>
    </source>
</reference>
<gene>
    <name evidence="1" type="primary">rplA</name>
    <name type="ordered locus">Teth514_0856</name>
</gene>
<accession>B0K5G5</accession>
<evidence type="ECO:0000255" key="1">
    <source>
        <dbReference type="HAMAP-Rule" id="MF_01318"/>
    </source>
</evidence>
<evidence type="ECO:0000305" key="2"/>
<dbReference type="EMBL" id="CP000923">
    <property type="protein sequence ID" value="ABY92158.1"/>
    <property type="molecule type" value="Genomic_DNA"/>
</dbReference>
<dbReference type="RefSeq" id="WP_003868696.1">
    <property type="nucleotide sequence ID" value="NC_010320.1"/>
</dbReference>
<dbReference type="SMR" id="B0K5G5"/>
<dbReference type="KEGG" id="tex:Teth514_0856"/>
<dbReference type="HOGENOM" id="CLU_062853_0_0_9"/>
<dbReference type="Proteomes" id="UP000002155">
    <property type="component" value="Chromosome"/>
</dbReference>
<dbReference type="GO" id="GO:0015934">
    <property type="term" value="C:large ribosomal subunit"/>
    <property type="evidence" value="ECO:0007669"/>
    <property type="project" value="InterPro"/>
</dbReference>
<dbReference type="GO" id="GO:0019843">
    <property type="term" value="F:rRNA binding"/>
    <property type="evidence" value="ECO:0007669"/>
    <property type="project" value="UniProtKB-UniRule"/>
</dbReference>
<dbReference type="GO" id="GO:0003735">
    <property type="term" value="F:structural constituent of ribosome"/>
    <property type="evidence" value="ECO:0007669"/>
    <property type="project" value="InterPro"/>
</dbReference>
<dbReference type="GO" id="GO:0000049">
    <property type="term" value="F:tRNA binding"/>
    <property type="evidence" value="ECO:0007669"/>
    <property type="project" value="UniProtKB-KW"/>
</dbReference>
<dbReference type="GO" id="GO:0006417">
    <property type="term" value="P:regulation of translation"/>
    <property type="evidence" value="ECO:0007669"/>
    <property type="project" value="UniProtKB-KW"/>
</dbReference>
<dbReference type="GO" id="GO:0006412">
    <property type="term" value="P:translation"/>
    <property type="evidence" value="ECO:0007669"/>
    <property type="project" value="UniProtKB-UniRule"/>
</dbReference>
<dbReference type="CDD" id="cd00403">
    <property type="entry name" value="Ribosomal_L1"/>
    <property type="match status" value="1"/>
</dbReference>
<dbReference type="FunFam" id="3.40.50.790:FF:000001">
    <property type="entry name" value="50S ribosomal protein L1"/>
    <property type="match status" value="1"/>
</dbReference>
<dbReference type="Gene3D" id="3.30.190.20">
    <property type="match status" value="1"/>
</dbReference>
<dbReference type="Gene3D" id="3.40.50.790">
    <property type="match status" value="1"/>
</dbReference>
<dbReference type="HAMAP" id="MF_01318_B">
    <property type="entry name" value="Ribosomal_uL1_B"/>
    <property type="match status" value="1"/>
</dbReference>
<dbReference type="InterPro" id="IPR005878">
    <property type="entry name" value="Ribosom_uL1_bac-type"/>
</dbReference>
<dbReference type="InterPro" id="IPR002143">
    <property type="entry name" value="Ribosomal_uL1"/>
</dbReference>
<dbReference type="InterPro" id="IPR023674">
    <property type="entry name" value="Ribosomal_uL1-like"/>
</dbReference>
<dbReference type="InterPro" id="IPR028364">
    <property type="entry name" value="Ribosomal_uL1/biogenesis"/>
</dbReference>
<dbReference type="InterPro" id="IPR016095">
    <property type="entry name" value="Ribosomal_uL1_3-a/b-sand"/>
</dbReference>
<dbReference type="InterPro" id="IPR023673">
    <property type="entry name" value="Ribosomal_uL1_CS"/>
</dbReference>
<dbReference type="NCBIfam" id="TIGR01169">
    <property type="entry name" value="rplA_bact"/>
    <property type="match status" value="1"/>
</dbReference>
<dbReference type="PANTHER" id="PTHR36427">
    <property type="entry name" value="54S RIBOSOMAL PROTEIN L1, MITOCHONDRIAL"/>
    <property type="match status" value="1"/>
</dbReference>
<dbReference type="PANTHER" id="PTHR36427:SF3">
    <property type="entry name" value="LARGE RIBOSOMAL SUBUNIT PROTEIN UL1M"/>
    <property type="match status" value="1"/>
</dbReference>
<dbReference type="Pfam" id="PF00687">
    <property type="entry name" value="Ribosomal_L1"/>
    <property type="match status" value="1"/>
</dbReference>
<dbReference type="PIRSF" id="PIRSF002155">
    <property type="entry name" value="Ribosomal_L1"/>
    <property type="match status" value="1"/>
</dbReference>
<dbReference type="SUPFAM" id="SSF56808">
    <property type="entry name" value="Ribosomal protein L1"/>
    <property type="match status" value="1"/>
</dbReference>
<dbReference type="PROSITE" id="PS01199">
    <property type="entry name" value="RIBOSOMAL_L1"/>
    <property type="match status" value="1"/>
</dbReference>
<keyword id="KW-0678">Repressor</keyword>
<keyword id="KW-0687">Ribonucleoprotein</keyword>
<keyword id="KW-0689">Ribosomal protein</keyword>
<keyword id="KW-0694">RNA-binding</keyword>
<keyword id="KW-0699">rRNA-binding</keyword>
<keyword id="KW-0810">Translation regulation</keyword>
<keyword id="KW-0820">tRNA-binding</keyword>
<feature type="chain" id="PRO_1000141476" description="Large ribosomal subunit protein uL1">
    <location>
        <begin position="1"/>
        <end position="230"/>
    </location>
</feature>
<sequence>MKRGKKYLESLKLYDKTQQYSSDEAIDIVLKTAKANFDETIDLAVRLGVDPRHADQQVRGTVVLPHGTGKSVKVLVFAKGEKAKEAEAAGADYVGAEELVAKIQNENWFDYDVVVATPDMMGVVGRLGKILGPKGLMPNPKSGTVTFDLEKAIKEIKAGKIEYRVDKAGIIHVPIGKKSFGKEKLLENFRAVMDAIIKSKPAAAKGQYIKSVVLSSTMGPGVKVNPLKIF</sequence>
<proteinExistence type="inferred from homology"/>
<comment type="function">
    <text evidence="1">Binds directly to 23S rRNA. The L1 stalk is quite mobile in the ribosome, and is involved in E site tRNA release.</text>
</comment>
<comment type="function">
    <text evidence="1">Protein L1 is also a translational repressor protein, it controls the translation of the L11 operon by binding to its mRNA.</text>
</comment>
<comment type="subunit">
    <text evidence="1">Part of the 50S ribosomal subunit.</text>
</comment>
<comment type="similarity">
    <text evidence="1">Belongs to the universal ribosomal protein uL1 family.</text>
</comment>